<proteinExistence type="evidence at protein level"/>
<evidence type="ECO:0000255" key="1"/>
<evidence type="ECO:0000255" key="2">
    <source>
        <dbReference type="PROSITE-ProRule" id="PRU00274"/>
    </source>
</evidence>
<evidence type="ECO:0000269" key="3">
    <source>
    </source>
</evidence>
<evidence type="ECO:0000303" key="4">
    <source>
    </source>
</evidence>
<evidence type="ECO:0000305" key="5"/>
<evidence type="ECO:0000305" key="6">
    <source>
    </source>
</evidence>
<dbReference type="EMBL" id="EU400543">
    <property type="protein sequence ID" value="ABZ04157.1"/>
    <property type="molecule type" value="mRNA"/>
</dbReference>
<dbReference type="SMR" id="B0ZT25"/>
<dbReference type="GO" id="GO:0005576">
    <property type="term" value="C:extracellular region"/>
    <property type="evidence" value="ECO:0007669"/>
    <property type="project" value="UniProtKB-SubCell"/>
</dbReference>
<dbReference type="GO" id="GO:0030141">
    <property type="term" value="C:secretory granule"/>
    <property type="evidence" value="ECO:0007669"/>
    <property type="project" value="TreeGrafter"/>
</dbReference>
<dbReference type="GO" id="GO:0004252">
    <property type="term" value="F:serine-type endopeptidase activity"/>
    <property type="evidence" value="ECO:0007669"/>
    <property type="project" value="InterPro"/>
</dbReference>
<dbReference type="GO" id="GO:0090729">
    <property type="term" value="F:toxin activity"/>
    <property type="evidence" value="ECO:0007669"/>
    <property type="project" value="UniProtKB-KW"/>
</dbReference>
<dbReference type="GO" id="GO:0006508">
    <property type="term" value="P:proteolysis"/>
    <property type="evidence" value="ECO:0007669"/>
    <property type="project" value="InterPro"/>
</dbReference>
<dbReference type="CDD" id="cd00190">
    <property type="entry name" value="Tryp_SPc"/>
    <property type="match status" value="1"/>
</dbReference>
<dbReference type="FunFam" id="2.40.10.10:FF:000158">
    <property type="entry name" value="Thrombin-like enzyme saxthrombin"/>
    <property type="match status" value="1"/>
</dbReference>
<dbReference type="FunFam" id="2.40.10.10:FF:000153">
    <property type="entry name" value="Venom plasminogen activator TSV-PA"/>
    <property type="match status" value="1"/>
</dbReference>
<dbReference type="Gene3D" id="2.40.10.10">
    <property type="entry name" value="Trypsin-like serine proteases"/>
    <property type="match status" value="2"/>
</dbReference>
<dbReference type="InterPro" id="IPR009003">
    <property type="entry name" value="Peptidase_S1_PA"/>
</dbReference>
<dbReference type="InterPro" id="IPR043504">
    <property type="entry name" value="Peptidase_S1_PA_chymotrypsin"/>
</dbReference>
<dbReference type="InterPro" id="IPR001314">
    <property type="entry name" value="Peptidase_S1A"/>
</dbReference>
<dbReference type="InterPro" id="IPR001254">
    <property type="entry name" value="Trypsin_dom"/>
</dbReference>
<dbReference type="PANTHER" id="PTHR24271:SF47">
    <property type="entry name" value="KALLIKREIN-1"/>
    <property type="match status" value="1"/>
</dbReference>
<dbReference type="PANTHER" id="PTHR24271">
    <property type="entry name" value="KALLIKREIN-RELATED"/>
    <property type="match status" value="1"/>
</dbReference>
<dbReference type="Pfam" id="PF00089">
    <property type="entry name" value="Trypsin"/>
    <property type="match status" value="1"/>
</dbReference>
<dbReference type="PRINTS" id="PR00722">
    <property type="entry name" value="CHYMOTRYPSIN"/>
</dbReference>
<dbReference type="SMART" id="SM00020">
    <property type="entry name" value="Tryp_SPc"/>
    <property type="match status" value="1"/>
</dbReference>
<dbReference type="SUPFAM" id="SSF50494">
    <property type="entry name" value="Trypsin-like serine proteases"/>
    <property type="match status" value="1"/>
</dbReference>
<dbReference type="PROSITE" id="PS50240">
    <property type="entry name" value="TRYPSIN_DOM"/>
    <property type="match status" value="1"/>
</dbReference>
<name>VSPH_PROJR</name>
<organism>
    <name type="scientific">Protobothrops jerdonii</name>
    <name type="common">Jerdon's pitviper</name>
    <name type="synonym">Trimeresurus jerdonii</name>
    <dbReference type="NCBI Taxonomy" id="242841"/>
    <lineage>
        <taxon>Eukaryota</taxon>
        <taxon>Metazoa</taxon>
        <taxon>Chordata</taxon>
        <taxon>Craniata</taxon>
        <taxon>Vertebrata</taxon>
        <taxon>Euteleostomi</taxon>
        <taxon>Lepidosauria</taxon>
        <taxon>Squamata</taxon>
        <taxon>Bifurcata</taxon>
        <taxon>Unidentata</taxon>
        <taxon>Episquamata</taxon>
        <taxon>Toxicofera</taxon>
        <taxon>Serpentes</taxon>
        <taxon>Colubroidea</taxon>
        <taxon>Viperidae</taxon>
        <taxon>Crotalinae</taxon>
        <taxon>Protobothrops</taxon>
    </lineage>
</organism>
<accession>B0ZT25</accession>
<reference key="1">
    <citation type="journal article" date="2008" name="Toxicon">
        <title>A unique group of inactive serine protease homologues from snake venom.</title>
        <authorList>
            <person name="Wu J."/>
            <person name="Jin Y."/>
            <person name="Zhong S."/>
            <person name="Chen R."/>
            <person name="Zhu S."/>
            <person name="Wang W."/>
            <person name="Lu Q."/>
            <person name="Xiong Y."/>
        </authorList>
    </citation>
    <scope>NUCLEOTIDE SEQUENCE [MRNA]</scope>
    <scope>PROTEIN SEQUENCE OF 25-67</scope>
    <scope>SUBCELLULAR LOCATION</scope>
    <source>
        <tissue>Venom</tissue>
        <tissue>Venom gland</tissue>
    </source>
</reference>
<keyword id="KW-0903">Direct protein sequencing</keyword>
<keyword id="KW-1015">Disulfide bond</keyword>
<keyword id="KW-0325">Glycoprotein</keyword>
<keyword id="KW-1199">Hemostasis impairing toxin</keyword>
<keyword id="KW-0964">Secreted</keyword>
<keyword id="KW-0721">Serine protease homolog</keyword>
<keyword id="KW-0732">Signal</keyword>
<keyword id="KW-0800">Toxin</keyword>
<protein>
    <recommendedName>
        <fullName evidence="4">Snake venom serine protease homolog</fullName>
        <shortName evidence="4">TjsvSPH</shortName>
    </recommendedName>
    <alternativeName>
        <fullName>Serine proteinase-like protein</fullName>
    </alternativeName>
</protein>
<sequence length="260" mass="28794">MVLVRVLANLLMLQLSYAQKSSELIIGGDECNINEHRFLVALYTFRSRRFHCSGTLINEEWVLSAARCDRKNIRIQLGMHSTNVINEDVQTRVPKEKFFCLSSKTYTKWNKDIMLIRLKKPVNNSTHIAPVSLPSNPPSLGSVCRVMGWGTISATKETHPDVPYCANINILDYSVCRAAYARLPATSRTLCAGILEGGKDSCLTDSGGPLICNGQFQGIVSWGGHPCGQPRKPGLYTKVFDHLDWIKSIIAGNKDATCPP</sequence>
<feature type="signal peptide" evidence="1">
    <location>
        <begin position="1"/>
        <end position="18"/>
    </location>
</feature>
<feature type="propeptide" id="PRO_0000359441" evidence="3">
    <location>
        <begin position="19"/>
        <end position="24"/>
    </location>
</feature>
<feature type="chain" id="PRO_5000311702" description="Snake venom serine protease homolog">
    <location>
        <begin position="25"/>
        <end position="260"/>
    </location>
</feature>
<feature type="domain" description="Peptidase S1" evidence="2">
    <location>
        <begin position="25"/>
        <end position="251"/>
    </location>
</feature>
<feature type="active site" description="Charge relay system" evidence="2">
    <location>
        <position position="112"/>
    </location>
</feature>
<feature type="active site" description="Charge relay system" evidence="2">
    <location>
        <position position="206"/>
    </location>
</feature>
<feature type="glycosylation site" description="N-linked (GlcNAc...) asparagine" evidence="1">
    <location>
        <position position="123"/>
    </location>
</feature>
<feature type="glycosylation site" description="N-linked (GlcNAc...) asparagine" evidence="1">
    <location>
        <position position="124"/>
    </location>
</feature>
<feature type="disulfide bond" evidence="2">
    <location>
        <begin position="31"/>
        <end position="165"/>
    </location>
</feature>
<feature type="disulfide bond" evidence="2">
    <location>
        <begin position="52"/>
        <end position="68"/>
    </location>
</feature>
<feature type="disulfide bond" evidence="2">
    <location>
        <begin position="100"/>
        <end position="258"/>
    </location>
</feature>
<feature type="disulfide bond" evidence="2">
    <location>
        <begin position="144"/>
        <end position="212"/>
    </location>
</feature>
<feature type="disulfide bond" evidence="2">
    <location>
        <begin position="176"/>
        <end position="191"/>
    </location>
</feature>
<feature type="disulfide bond" evidence="2">
    <location>
        <begin position="202"/>
        <end position="227"/>
    </location>
</feature>
<comment type="function">
    <text evidence="3 5">Snake venom serine protease homolog (PubMed:18590752). May act in the hemostasis system of the prey (Probable).</text>
</comment>
<comment type="subcellular location">
    <subcellularLocation>
        <location evidence="3">Secreted</location>
    </subcellularLocation>
</comment>
<comment type="tissue specificity">
    <text evidence="6">Expressed by the venom gland.</text>
</comment>
<comment type="miscellaneous">
    <text evidence="3">Is devoid of arginine esterase, fibrinogenolytic and proteolytic activities.</text>
</comment>
<comment type="similarity">
    <text evidence="5">Belongs to the peptidase S1 family. Snake venom subfamily.</text>
</comment>
<comment type="caution">
    <text evidence="5">Arg-67 is present instead of the conserved His which is expected to be an active site residue.</text>
</comment>